<protein>
    <recommendedName>
        <fullName evidence="1">Ribonuclease HII</fullName>
        <shortName evidence="1">RNase HII</shortName>
        <ecNumber evidence="1">3.1.26.4</ecNumber>
    </recommendedName>
</protein>
<keyword id="KW-0963">Cytoplasm</keyword>
<keyword id="KW-0255">Endonuclease</keyword>
<keyword id="KW-0378">Hydrolase</keyword>
<keyword id="KW-0464">Manganese</keyword>
<keyword id="KW-0479">Metal-binding</keyword>
<keyword id="KW-0540">Nuclease</keyword>
<keyword id="KW-1185">Reference proteome</keyword>
<feature type="chain" id="PRO_0000334983" description="Ribonuclease HII">
    <location>
        <begin position="1"/>
        <end position="212"/>
    </location>
</feature>
<feature type="domain" description="RNase H type-2" evidence="2">
    <location>
        <begin position="1"/>
        <end position="205"/>
    </location>
</feature>
<feature type="binding site" evidence="1">
    <location>
        <position position="7"/>
    </location>
    <ligand>
        <name>a divalent metal cation</name>
        <dbReference type="ChEBI" id="CHEBI:60240"/>
    </ligand>
</feature>
<feature type="binding site" evidence="1">
    <location>
        <position position="8"/>
    </location>
    <ligand>
        <name>a divalent metal cation</name>
        <dbReference type="ChEBI" id="CHEBI:60240"/>
    </ligand>
</feature>
<feature type="binding site" evidence="1">
    <location>
        <position position="100"/>
    </location>
    <ligand>
        <name>a divalent metal cation</name>
        <dbReference type="ChEBI" id="CHEBI:60240"/>
    </ligand>
</feature>
<name>RNH2_METLZ</name>
<proteinExistence type="inferred from homology"/>
<organism>
    <name type="scientific">Methanocorpusculum labreanum (strain ATCC 43576 / DSM 4855 / Z)</name>
    <dbReference type="NCBI Taxonomy" id="410358"/>
    <lineage>
        <taxon>Archaea</taxon>
        <taxon>Methanobacteriati</taxon>
        <taxon>Methanobacteriota</taxon>
        <taxon>Stenosarchaea group</taxon>
        <taxon>Methanomicrobia</taxon>
        <taxon>Methanomicrobiales</taxon>
        <taxon>Methanocorpusculaceae</taxon>
        <taxon>Methanocorpusculum</taxon>
    </lineage>
</organism>
<reference key="1">
    <citation type="journal article" date="2009" name="Stand. Genomic Sci.">
        <title>Complete genome sequence of Methanocorpusculum labreanum type strain Z.</title>
        <authorList>
            <person name="Anderson I.J."/>
            <person name="Sieprawska-Lupa M."/>
            <person name="Goltsman E."/>
            <person name="Lapidus A."/>
            <person name="Copeland A."/>
            <person name="Glavina Del Rio T."/>
            <person name="Tice H."/>
            <person name="Dalin E."/>
            <person name="Barry K."/>
            <person name="Pitluck S."/>
            <person name="Hauser L."/>
            <person name="Land M."/>
            <person name="Lucas S."/>
            <person name="Richardson P."/>
            <person name="Whitman W.B."/>
            <person name="Kyrpides N.C."/>
        </authorList>
    </citation>
    <scope>NUCLEOTIDE SEQUENCE [LARGE SCALE GENOMIC DNA]</scope>
    <source>
        <strain>ATCC 43576 / DSM 4855 / Z</strain>
    </source>
</reference>
<evidence type="ECO:0000255" key="1">
    <source>
        <dbReference type="HAMAP-Rule" id="MF_00052"/>
    </source>
</evidence>
<evidence type="ECO:0000255" key="2">
    <source>
        <dbReference type="PROSITE-ProRule" id="PRU01319"/>
    </source>
</evidence>
<gene>
    <name evidence="1" type="primary">rnhB</name>
    <name type="ordered locus">Mlab_1488</name>
</gene>
<accession>A2STJ6</accession>
<comment type="function">
    <text evidence="1">Endonuclease that specifically degrades the RNA of RNA-DNA hybrids.</text>
</comment>
<comment type="catalytic activity">
    <reaction evidence="1">
        <text>Endonucleolytic cleavage to 5'-phosphomonoester.</text>
        <dbReference type="EC" id="3.1.26.4"/>
    </reaction>
</comment>
<comment type="cofactor">
    <cofactor evidence="1">
        <name>Mn(2+)</name>
        <dbReference type="ChEBI" id="CHEBI:29035"/>
    </cofactor>
    <cofactor evidence="1">
        <name>Mg(2+)</name>
        <dbReference type="ChEBI" id="CHEBI:18420"/>
    </cofactor>
    <text evidence="1">Manganese or magnesium. Binds 1 divalent metal ion per monomer in the absence of substrate. May bind a second metal ion after substrate binding.</text>
</comment>
<comment type="subcellular location">
    <subcellularLocation>
        <location evidence="1">Cytoplasm</location>
    </subcellularLocation>
</comment>
<comment type="similarity">
    <text evidence="1">Belongs to the RNase HII family.</text>
</comment>
<dbReference type="EC" id="3.1.26.4" evidence="1"/>
<dbReference type="EMBL" id="CP000559">
    <property type="protein sequence ID" value="ABN07652.1"/>
    <property type="molecule type" value="Genomic_DNA"/>
</dbReference>
<dbReference type="RefSeq" id="WP_011833855.1">
    <property type="nucleotide sequence ID" value="NC_008942.1"/>
</dbReference>
<dbReference type="SMR" id="A2STJ6"/>
<dbReference type="STRING" id="410358.Mlab_1488"/>
<dbReference type="GeneID" id="4795940"/>
<dbReference type="KEGG" id="mla:Mlab_1488"/>
<dbReference type="eggNOG" id="arCOG04121">
    <property type="taxonomic scope" value="Archaea"/>
</dbReference>
<dbReference type="HOGENOM" id="CLU_036532_0_4_2"/>
<dbReference type="OrthoDB" id="33866at2157"/>
<dbReference type="Proteomes" id="UP000000365">
    <property type="component" value="Chromosome"/>
</dbReference>
<dbReference type="GO" id="GO:0005737">
    <property type="term" value="C:cytoplasm"/>
    <property type="evidence" value="ECO:0007669"/>
    <property type="project" value="UniProtKB-SubCell"/>
</dbReference>
<dbReference type="GO" id="GO:0032299">
    <property type="term" value="C:ribonuclease H2 complex"/>
    <property type="evidence" value="ECO:0007669"/>
    <property type="project" value="TreeGrafter"/>
</dbReference>
<dbReference type="GO" id="GO:0030145">
    <property type="term" value="F:manganese ion binding"/>
    <property type="evidence" value="ECO:0007669"/>
    <property type="project" value="UniProtKB-UniRule"/>
</dbReference>
<dbReference type="GO" id="GO:0003723">
    <property type="term" value="F:RNA binding"/>
    <property type="evidence" value="ECO:0007669"/>
    <property type="project" value="InterPro"/>
</dbReference>
<dbReference type="GO" id="GO:0004523">
    <property type="term" value="F:RNA-DNA hybrid ribonuclease activity"/>
    <property type="evidence" value="ECO:0007669"/>
    <property type="project" value="UniProtKB-UniRule"/>
</dbReference>
<dbReference type="GO" id="GO:0043137">
    <property type="term" value="P:DNA replication, removal of RNA primer"/>
    <property type="evidence" value="ECO:0007669"/>
    <property type="project" value="TreeGrafter"/>
</dbReference>
<dbReference type="GO" id="GO:0006298">
    <property type="term" value="P:mismatch repair"/>
    <property type="evidence" value="ECO:0007669"/>
    <property type="project" value="TreeGrafter"/>
</dbReference>
<dbReference type="CDD" id="cd07180">
    <property type="entry name" value="RNase_HII_archaea_like"/>
    <property type="match status" value="1"/>
</dbReference>
<dbReference type="FunFam" id="1.10.10.460:FF:000001">
    <property type="entry name" value="Ribonuclease"/>
    <property type="match status" value="1"/>
</dbReference>
<dbReference type="Gene3D" id="3.30.420.10">
    <property type="entry name" value="Ribonuclease H-like superfamily/Ribonuclease H"/>
    <property type="match status" value="1"/>
</dbReference>
<dbReference type="Gene3D" id="1.10.10.460">
    <property type="entry name" value="Ribonuclease hii. Domain 2"/>
    <property type="match status" value="1"/>
</dbReference>
<dbReference type="HAMAP" id="MF_00052_A">
    <property type="entry name" value="RNase_HII_A"/>
    <property type="match status" value="1"/>
</dbReference>
<dbReference type="InterPro" id="IPR004649">
    <property type="entry name" value="RNase_H2_suA"/>
</dbReference>
<dbReference type="InterPro" id="IPR001352">
    <property type="entry name" value="RNase_HII/HIII"/>
</dbReference>
<dbReference type="InterPro" id="IPR024567">
    <property type="entry name" value="RNase_HII/HIII_dom"/>
</dbReference>
<dbReference type="InterPro" id="IPR020787">
    <property type="entry name" value="RNase_HII_arc"/>
</dbReference>
<dbReference type="InterPro" id="IPR023160">
    <property type="entry name" value="RNase_HII_hlx-loop-hlx_cap_dom"/>
</dbReference>
<dbReference type="InterPro" id="IPR012337">
    <property type="entry name" value="RNaseH-like_sf"/>
</dbReference>
<dbReference type="InterPro" id="IPR036397">
    <property type="entry name" value="RNaseH_sf"/>
</dbReference>
<dbReference type="NCBIfam" id="TIGR00729">
    <property type="entry name" value="ribonuclease HII"/>
    <property type="match status" value="1"/>
</dbReference>
<dbReference type="PANTHER" id="PTHR10954:SF23">
    <property type="entry name" value="RIBONUCLEASE"/>
    <property type="match status" value="1"/>
</dbReference>
<dbReference type="PANTHER" id="PTHR10954">
    <property type="entry name" value="RIBONUCLEASE H2 SUBUNIT A"/>
    <property type="match status" value="1"/>
</dbReference>
<dbReference type="Pfam" id="PF01351">
    <property type="entry name" value="RNase_HII"/>
    <property type="match status" value="1"/>
</dbReference>
<dbReference type="SUPFAM" id="SSF53098">
    <property type="entry name" value="Ribonuclease H-like"/>
    <property type="match status" value="1"/>
</dbReference>
<dbReference type="PROSITE" id="PS51975">
    <property type="entry name" value="RNASE_H_2"/>
    <property type="match status" value="1"/>
</dbReference>
<sequence length="212" mass="23181">MTICGVDEAGKGPVLGPMITAGVLVSDMSELEMLGIKDSKKLSPKKRESLFEEITFSWKTYTVVRTPFDIDSREGTMNAFTASCHADVVRALCADFVYLDACDVNAKRFGENVLRLSGSSAHVCSEHKADAKYAVVGAASIVAKVTRDRCIADLKEEYGEIGSGYPSDPATISFLTEYIRTRGEVPLCARRSWQTVQDILDRASQTGLSDFF</sequence>